<organism>
    <name type="scientific">Arabidopsis thaliana</name>
    <name type="common">Mouse-ear cress</name>
    <dbReference type="NCBI Taxonomy" id="3702"/>
    <lineage>
        <taxon>Eukaryota</taxon>
        <taxon>Viridiplantae</taxon>
        <taxon>Streptophyta</taxon>
        <taxon>Embryophyta</taxon>
        <taxon>Tracheophyta</taxon>
        <taxon>Spermatophyta</taxon>
        <taxon>Magnoliopsida</taxon>
        <taxon>eudicotyledons</taxon>
        <taxon>Gunneridae</taxon>
        <taxon>Pentapetalae</taxon>
        <taxon>rosids</taxon>
        <taxon>malvids</taxon>
        <taxon>Brassicales</taxon>
        <taxon>Brassicaceae</taxon>
        <taxon>Camelineae</taxon>
        <taxon>Arabidopsis</taxon>
    </lineage>
</organism>
<sequence>MAVKRSSKLTQTAMLKQILKRCSSLAKNQCYDEDGLPVDVPKGHFPVYVGEKRSRYIVPISFLTHPKFKSLLQQAEEEFGFNHDMGLTIPCEEVVFRSLTSMIG</sequence>
<feature type="chain" id="PRO_0000455146" description="Protein SMALL AUXIN UP-REGULATED RNA 12">
    <location>
        <begin position="1"/>
        <end position="104"/>
    </location>
</feature>
<reference key="1">
    <citation type="journal article" date="1999" name="Nature">
        <title>Sequence and analysis of chromosome 2 of the plant Arabidopsis thaliana.</title>
        <authorList>
            <person name="Lin X."/>
            <person name="Kaul S."/>
            <person name="Rounsley S.D."/>
            <person name="Shea T.P."/>
            <person name="Benito M.-I."/>
            <person name="Town C.D."/>
            <person name="Fujii C.Y."/>
            <person name="Mason T.M."/>
            <person name="Bowman C.L."/>
            <person name="Barnstead M.E."/>
            <person name="Feldblyum T.V."/>
            <person name="Buell C.R."/>
            <person name="Ketchum K.A."/>
            <person name="Lee J.J."/>
            <person name="Ronning C.M."/>
            <person name="Koo H.L."/>
            <person name="Moffat K.S."/>
            <person name="Cronin L.A."/>
            <person name="Shen M."/>
            <person name="Pai G."/>
            <person name="Van Aken S."/>
            <person name="Umayam L."/>
            <person name="Tallon L.J."/>
            <person name="Gill J.E."/>
            <person name="Adams M.D."/>
            <person name="Carrera A.J."/>
            <person name="Creasy T.H."/>
            <person name="Goodman H.M."/>
            <person name="Somerville C.R."/>
            <person name="Copenhaver G.P."/>
            <person name="Preuss D."/>
            <person name="Nierman W.C."/>
            <person name="White O."/>
            <person name="Eisen J.A."/>
            <person name="Salzberg S.L."/>
            <person name="Fraser C.M."/>
            <person name="Venter J.C."/>
        </authorList>
    </citation>
    <scope>NUCLEOTIDE SEQUENCE [LARGE SCALE GENOMIC DNA]</scope>
    <source>
        <strain>cv. Columbia</strain>
    </source>
</reference>
<reference key="2">
    <citation type="journal article" date="2017" name="Plant J.">
        <title>Araport11: a complete reannotation of the Arabidopsis thaliana reference genome.</title>
        <authorList>
            <person name="Cheng C.Y."/>
            <person name="Krishnakumar V."/>
            <person name="Chan A.P."/>
            <person name="Thibaud-Nissen F."/>
            <person name="Schobel S."/>
            <person name="Town C.D."/>
        </authorList>
    </citation>
    <scope>GENOME REANNOTATION</scope>
    <source>
        <strain>cv. Columbia</strain>
    </source>
</reference>
<reference key="3">
    <citation type="journal article" date="2002" name="Science">
        <title>Functional annotation of a full-length Arabidopsis cDNA collection.</title>
        <authorList>
            <person name="Seki M."/>
            <person name="Narusaka M."/>
            <person name="Kamiya A."/>
            <person name="Ishida J."/>
            <person name="Satou M."/>
            <person name="Sakurai T."/>
            <person name="Nakajima M."/>
            <person name="Enju A."/>
            <person name="Akiyama K."/>
            <person name="Oono Y."/>
            <person name="Muramatsu M."/>
            <person name="Hayashizaki Y."/>
            <person name="Kawai J."/>
            <person name="Carninci P."/>
            <person name="Itoh M."/>
            <person name="Ishii Y."/>
            <person name="Arakawa T."/>
            <person name="Shibata K."/>
            <person name="Shinagawa A."/>
            <person name="Shinozaki K."/>
        </authorList>
    </citation>
    <scope>NUCLEOTIDE SEQUENCE [LARGE SCALE MRNA]</scope>
    <source>
        <strain>cv. Columbia</strain>
    </source>
</reference>
<reference key="4">
    <citation type="journal article" date="2003" name="Science">
        <title>Empirical analysis of transcriptional activity in the Arabidopsis genome.</title>
        <authorList>
            <person name="Yamada K."/>
            <person name="Lim J."/>
            <person name="Dale J.M."/>
            <person name="Chen H."/>
            <person name="Shinn P."/>
            <person name="Palm C.J."/>
            <person name="Southwick A.M."/>
            <person name="Wu H.C."/>
            <person name="Kim C.J."/>
            <person name="Nguyen M."/>
            <person name="Pham P.K."/>
            <person name="Cheuk R.F."/>
            <person name="Karlin-Newmann G."/>
            <person name="Liu S.X."/>
            <person name="Lam B."/>
            <person name="Sakano H."/>
            <person name="Wu T."/>
            <person name="Yu G."/>
            <person name="Miranda M."/>
            <person name="Quach H.L."/>
            <person name="Tripp M."/>
            <person name="Chang C.H."/>
            <person name="Lee J.M."/>
            <person name="Toriumi M.J."/>
            <person name="Chan M.M."/>
            <person name="Tang C.C."/>
            <person name="Onodera C.S."/>
            <person name="Deng J.M."/>
            <person name="Akiyama K."/>
            <person name="Ansari Y."/>
            <person name="Arakawa T."/>
            <person name="Banh J."/>
            <person name="Banno F."/>
            <person name="Bowser L."/>
            <person name="Brooks S.Y."/>
            <person name="Carninci P."/>
            <person name="Chao Q."/>
            <person name="Choy N."/>
            <person name="Enju A."/>
            <person name="Goldsmith A.D."/>
            <person name="Gurjal M."/>
            <person name="Hansen N.F."/>
            <person name="Hayashizaki Y."/>
            <person name="Johnson-Hopson C."/>
            <person name="Hsuan V.W."/>
            <person name="Iida K."/>
            <person name="Karnes M."/>
            <person name="Khan S."/>
            <person name="Koesema E."/>
            <person name="Ishida J."/>
            <person name="Jiang P.X."/>
            <person name="Jones T."/>
            <person name="Kawai J."/>
            <person name="Kamiya A."/>
            <person name="Meyers C."/>
            <person name="Nakajima M."/>
            <person name="Narusaka M."/>
            <person name="Seki M."/>
            <person name="Sakurai T."/>
            <person name="Satou M."/>
            <person name="Tamse R."/>
            <person name="Vaysberg M."/>
            <person name="Wallender E.K."/>
            <person name="Wong C."/>
            <person name="Yamamura Y."/>
            <person name="Yuan S."/>
            <person name="Shinozaki K."/>
            <person name="Davis R.W."/>
            <person name="Theologis A."/>
            <person name="Ecker J.R."/>
        </authorList>
    </citation>
    <scope>NUCLEOTIDE SEQUENCE [LARGE SCALE MRNA]</scope>
    <source>
        <strain>cv. Columbia</strain>
    </source>
</reference>
<reference key="5">
    <citation type="journal article" date="2017" name="BMC Plant Biol.">
        <title>Divergent regulation of Arabidopsis SAUR genes: a focus on the SAUR10-clade.</title>
        <authorList>
            <person name="van Mourik H."/>
            <person name="van Dijk A.D.J."/>
            <person name="Stortenbeker N."/>
            <person name="Angenent G.C."/>
            <person name="Bemer M."/>
        </authorList>
    </citation>
    <scope>TISSUE SPECIFICITY</scope>
    <scope>DEVELOPMENTAL STAGE</scope>
    <scope>INDUCTION BY AUXIN AND BRASSINOSTEROIDS</scope>
    <scope>GENE FAMILY</scope>
    <source>
        <strain>cv. Columbia</strain>
    </source>
</reference>
<evidence type="ECO:0000250" key="1">
    <source>
        <dbReference type="UniProtKB" id="O65648"/>
    </source>
</evidence>
<evidence type="ECO:0000250" key="2">
    <source>
        <dbReference type="UniProtKB" id="Q9FJG1"/>
    </source>
</evidence>
<evidence type="ECO:0000250" key="3">
    <source>
        <dbReference type="UniProtKB" id="Q9SI60"/>
    </source>
</evidence>
<evidence type="ECO:0000269" key="4">
    <source>
    </source>
</evidence>
<evidence type="ECO:0000303" key="5">
    <source>
    </source>
</evidence>
<evidence type="ECO:0000305" key="6"/>
<evidence type="ECO:0000312" key="7">
    <source>
        <dbReference type="Araport" id="AT2G21220"/>
    </source>
</evidence>
<evidence type="ECO:0000312" key="8">
    <source>
        <dbReference type="EMBL" id="AAD24828.1"/>
    </source>
</evidence>
<gene>
    <name evidence="5" type="primary">SAUR12</name>
    <name evidence="7" type="ordered locus">At2g21220</name>
    <name evidence="8" type="ORF">F7O24.6</name>
</gene>
<keyword id="KW-1003">Cell membrane</keyword>
<keyword id="KW-0217">Developmental protein</keyword>
<keyword id="KW-0341">Growth regulation</keyword>
<keyword id="KW-0472">Membrane</keyword>
<keyword id="KW-1185">Reference proteome</keyword>
<dbReference type="EMBL" id="AC006264">
    <property type="protein sequence ID" value="AAM15223.1"/>
    <property type="molecule type" value="Genomic_DNA"/>
</dbReference>
<dbReference type="EMBL" id="AC007142">
    <property type="protein sequence ID" value="AAD24828.1"/>
    <property type="molecule type" value="Genomic_DNA"/>
</dbReference>
<dbReference type="EMBL" id="CP002685">
    <property type="protein sequence ID" value="AEC07141.1"/>
    <property type="molecule type" value="Genomic_DNA"/>
</dbReference>
<dbReference type="EMBL" id="BT005544">
    <property type="protein sequence ID" value="AAO63964.1"/>
    <property type="molecule type" value="mRNA"/>
</dbReference>
<dbReference type="EMBL" id="AK118340">
    <property type="protein sequence ID" value="BAC42954.1"/>
    <property type="molecule type" value="mRNA"/>
</dbReference>
<dbReference type="PIR" id="F84598">
    <property type="entry name" value="F84598"/>
</dbReference>
<dbReference type="RefSeq" id="NP_179718.1">
    <property type="nucleotide sequence ID" value="NM_127694.3"/>
</dbReference>
<dbReference type="FunCoup" id="Q9SIG9">
    <property type="interactions" value="289"/>
</dbReference>
<dbReference type="STRING" id="3702.Q9SIG9"/>
<dbReference type="PaxDb" id="3702-AT2G21220.1"/>
<dbReference type="EnsemblPlants" id="AT2G21220.1">
    <property type="protein sequence ID" value="AT2G21220.1"/>
    <property type="gene ID" value="AT2G21220"/>
</dbReference>
<dbReference type="GeneID" id="816659"/>
<dbReference type="Gramene" id="AT2G21220.1">
    <property type="protein sequence ID" value="AT2G21220.1"/>
    <property type="gene ID" value="AT2G21220"/>
</dbReference>
<dbReference type="KEGG" id="ath:AT2G21220"/>
<dbReference type="Araport" id="AT2G21220"/>
<dbReference type="TAIR" id="AT2G21220">
    <property type="gene designation" value="SAUR12"/>
</dbReference>
<dbReference type="eggNOG" id="ENOG502RZ3M">
    <property type="taxonomic scope" value="Eukaryota"/>
</dbReference>
<dbReference type="HOGENOM" id="CLU_098106_2_3_1"/>
<dbReference type="InParanoid" id="Q9SIG9"/>
<dbReference type="OMA" id="CYNDEDH"/>
<dbReference type="OrthoDB" id="1841988at2759"/>
<dbReference type="PhylomeDB" id="Q9SIG9"/>
<dbReference type="PRO" id="PR:Q9SIG9"/>
<dbReference type="Proteomes" id="UP000006548">
    <property type="component" value="Chromosome 2"/>
</dbReference>
<dbReference type="ExpressionAtlas" id="Q9SIG9">
    <property type="expression patterns" value="baseline and differential"/>
</dbReference>
<dbReference type="GO" id="GO:0005886">
    <property type="term" value="C:plasma membrane"/>
    <property type="evidence" value="ECO:0007669"/>
    <property type="project" value="UniProtKB-SubCell"/>
</dbReference>
<dbReference type="GO" id="GO:0009733">
    <property type="term" value="P:response to auxin"/>
    <property type="evidence" value="ECO:0000270"/>
    <property type="project" value="UniProtKB"/>
</dbReference>
<dbReference type="GO" id="GO:0009741">
    <property type="term" value="P:response to brassinosteroid"/>
    <property type="evidence" value="ECO:0000270"/>
    <property type="project" value="UniProtKB"/>
</dbReference>
<dbReference type="InterPro" id="IPR003676">
    <property type="entry name" value="SAUR_fam"/>
</dbReference>
<dbReference type="PANTHER" id="PTHR31929">
    <property type="entry name" value="SAUR-LIKE AUXIN-RESPONSIVE PROTEIN FAMILY-RELATED"/>
    <property type="match status" value="1"/>
</dbReference>
<dbReference type="Pfam" id="PF02519">
    <property type="entry name" value="Auxin_inducible"/>
    <property type="match status" value="1"/>
</dbReference>
<accession>Q9SIG9</accession>
<protein>
    <recommendedName>
        <fullName evidence="5">Protein SMALL AUXIN UP-REGULATED RNA 12</fullName>
    </recommendedName>
</protein>
<proteinExistence type="evidence at transcript level"/>
<name>SAU12_ARATH</name>
<comment type="function">
    <text evidence="1 3">Provide a mechanistic link between auxin and plasma membrane H(+)-ATPases (PM H(+)-ATPases, e.g. AHA1 and AHA2), and triggers PM H(+)-ATPases activity by promoting phosphorylation of their C-terminal autoinhibitory domain as a result of PP2C-D subfamily of type 2C phosphatases inhibition, thus leading to the acidification of the apoplast and the facilitation of solutes and water uptake to drive cell expansion (By similarity). Triggers plant growth probably by promoting cell elongation (By similarity). Regulates branch angles and bending (By similarity).</text>
</comment>
<comment type="subcellular location">
    <subcellularLocation>
        <location evidence="2">Cell membrane</location>
        <topology evidence="2">Peripheral membrane protein</topology>
    </subcellularLocation>
</comment>
<comment type="tissue specificity">
    <text evidence="4">Expressed in flowers and etiolated hypocotyls.</text>
</comment>
<comment type="developmental stage">
    <text evidence="4">Confined to styles of stage 13-16 flowers.</text>
</comment>
<comment type="induction">
    <text evidence="4">Induced by auxin (PubMed:29258424). Triggered by brassinosteroids (PubMed:29258424).</text>
</comment>
<comment type="similarity">
    <text evidence="6">Belongs to the ARG7 family.</text>
</comment>